<protein>
    <recommendedName>
        <fullName evidence="1">Exodeoxyribonuclease 7 large subunit</fullName>
        <ecNumber evidence="1">3.1.11.6</ecNumber>
    </recommendedName>
    <alternativeName>
        <fullName evidence="1">Exodeoxyribonuclease VII large subunit</fullName>
        <shortName evidence="1">Exonuclease VII large subunit</shortName>
    </alternativeName>
</protein>
<organism>
    <name type="scientific">Lactobacillus delbrueckii subsp. bulgaricus (strain ATCC BAA-365 / Lb-18)</name>
    <dbReference type="NCBI Taxonomy" id="321956"/>
    <lineage>
        <taxon>Bacteria</taxon>
        <taxon>Bacillati</taxon>
        <taxon>Bacillota</taxon>
        <taxon>Bacilli</taxon>
        <taxon>Lactobacillales</taxon>
        <taxon>Lactobacillaceae</taxon>
        <taxon>Lactobacillus</taxon>
    </lineage>
</organism>
<evidence type="ECO:0000255" key="1">
    <source>
        <dbReference type="HAMAP-Rule" id="MF_00378"/>
    </source>
</evidence>
<keyword id="KW-0963">Cytoplasm</keyword>
<keyword id="KW-0269">Exonuclease</keyword>
<keyword id="KW-0378">Hydrolase</keyword>
<keyword id="KW-0540">Nuclease</keyword>
<gene>
    <name evidence="1" type="primary">xseA</name>
    <name type="ordered locus">LBUL_1319</name>
</gene>
<dbReference type="EC" id="3.1.11.6" evidence="1"/>
<dbReference type="EMBL" id="CP000412">
    <property type="protein sequence ID" value="ABJ58841.1"/>
    <property type="molecule type" value="Genomic_DNA"/>
</dbReference>
<dbReference type="RefSeq" id="WP_011678422.1">
    <property type="nucleotide sequence ID" value="NC_008529.1"/>
</dbReference>
<dbReference type="SMR" id="Q049N1"/>
<dbReference type="KEGG" id="lbu:LBUL_1319"/>
<dbReference type="HOGENOM" id="CLU_023625_3_1_9"/>
<dbReference type="BioCyc" id="LDEL321956:LBUL_RS06220-MONOMER"/>
<dbReference type="GO" id="GO:0005737">
    <property type="term" value="C:cytoplasm"/>
    <property type="evidence" value="ECO:0007669"/>
    <property type="project" value="UniProtKB-SubCell"/>
</dbReference>
<dbReference type="GO" id="GO:0009318">
    <property type="term" value="C:exodeoxyribonuclease VII complex"/>
    <property type="evidence" value="ECO:0007669"/>
    <property type="project" value="InterPro"/>
</dbReference>
<dbReference type="GO" id="GO:0008855">
    <property type="term" value="F:exodeoxyribonuclease VII activity"/>
    <property type="evidence" value="ECO:0007669"/>
    <property type="project" value="UniProtKB-UniRule"/>
</dbReference>
<dbReference type="GO" id="GO:0003676">
    <property type="term" value="F:nucleic acid binding"/>
    <property type="evidence" value="ECO:0007669"/>
    <property type="project" value="InterPro"/>
</dbReference>
<dbReference type="GO" id="GO:0006308">
    <property type="term" value="P:DNA catabolic process"/>
    <property type="evidence" value="ECO:0007669"/>
    <property type="project" value="UniProtKB-UniRule"/>
</dbReference>
<dbReference type="CDD" id="cd04489">
    <property type="entry name" value="ExoVII_LU_OBF"/>
    <property type="match status" value="1"/>
</dbReference>
<dbReference type="HAMAP" id="MF_00378">
    <property type="entry name" value="Exonuc_7_L"/>
    <property type="match status" value="1"/>
</dbReference>
<dbReference type="InterPro" id="IPR003753">
    <property type="entry name" value="Exonuc_VII_L"/>
</dbReference>
<dbReference type="InterPro" id="IPR020579">
    <property type="entry name" value="Exonuc_VII_lsu_C"/>
</dbReference>
<dbReference type="InterPro" id="IPR025824">
    <property type="entry name" value="OB-fold_nuc-bd_dom"/>
</dbReference>
<dbReference type="NCBIfam" id="TIGR00237">
    <property type="entry name" value="xseA"/>
    <property type="match status" value="1"/>
</dbReference>
<dbReference type="PANTHER" id="PTHR30008">
    <property type="entry name" value="EXODEOXYRIBONUCLEASE 7 LARGE SUBUNIT"/>
    <property type="match status" value="1"/>
</dbReference>
<dbReference type="PANTHER" id="PTHR30008:SF0">
    <property type="entry name" value="EXODEOXYRIBONUCLEASE 7 LARGE SUBUNIT"/>
    <property type="match status" value="1"/>
</dbReference>
<dbReference type="Pfam" id="PF02601">
    <property type="entry name" value="Exonuc_VII_L"/>
    <property type="match status" value="1"/>
</dbReference>
<dbReference type="Pfam" id="PF13742">
    <property type="entry name" value="tRNA_anti_2"/>
    <property type="match status" value="1"/>
</dbReference>
<proteinExistence type="inferred from homology"/>
<name>EX7L_LACDB</name>
<comment type="function">
    <text evidence="1">Bidirectionally degrades single-stranded DNA into large acid-insoluble oligonucleotides, which are then degraded further into small acid-soluble oligonucleotides.</text>
</comment>
<comment type="catalytic activity">
    <reaction evidence="1">
        <text>Exonucleolytic cleavage in either 5'- to 3'- or 3'- to 5'-direction to yield nucleoside 5'-phosphates.</text>
        <dbReference type="EC" id="3.1.11.6"/>
    </reaction>
</comment>
<comment type="subunit">
    <text evidence="1">Heterooligomer composed of large and small subunits.</text>
</comment>
<comment type="subcellular location">
    <subcellularLocation>
        <location evidence="1">Cytoplasm</location>
    </subcellularLocation>
</comment>
<comment type="similarity">
    <text evidence="1">Belongs to the XseA family.</text>
</comment>
<feature type="chain" id="PRO_0000303792" description="Exodeoxyribonuclease 7 large subunit">
    <location>
        <begin position="1"/>
        <end position="456"/>
    </location>
</feature>
<sequence length="456" mass="51644">MDSIKGTDEKYLTVSELNWYVKQKFDRDPYLRQIFLQGELSNFRFRRGGHQYFSLKDDKSKINVVMFRGDFDKVKFEPEEGMKVYVTGRLSTYEAQGSYQFYAKSMEPSGLGALYERFRQLQEKLAKEGLFAQEHKRPLPLFPDKIAVVTSASGAVIHDIMVTANRRFPHAEIDLFPAQVQGESAAGSLVSAMQQIQARADEYDVLIIGRGGGSLEDLWPFNEEEVVRQVYAMKMPVISSVGHETDTTLCDLAADCRAATPTAAAEMATPALPLVLAEIGQLQTRLLTDIRAVIQVRAQALAQLENSFIMKEPQRLYEQKMQQVDQLSQQLSRMMEVIVKDQGQKLSLLTQRLQHQAPDRRIKQLKQENSYLAKSLEMGIKRILEQKQAACRQAVQQLDDYSPLKTLARGYSYTTDASGNVVKSVQQLVPGDQVRLHLKDGQAIGRIEEIKEEKND</sequence>
<reference key="1">
    <citation type="journal article" date="2006" name="Proc. Natl. Acad. Sci. U.S.A.">
        <title>Comparative genomics of the lactic acid bacteria.</title>
        <authorList>
            <person name="Makarova K.S."/>
            <person name="Slesarev A."/>
            <person name="Wolf Y.I."/>
            <person name="Sorokin A."/>
            <person name="Mirkin B."/>
            <person name="Koonin E.V."/>
            <person name="Pavlov A."/>
            <person name="Pavlova N."/>
            <person name="Karamychev V."/>
            <person name="Polouchine N."/>
            <person name="Shakhova V."/>
            <person name="Grigoriev I."/>
            <person name="Lou Y."/>
            <person name="Rohksar D."/>
            <person name="Lucas S."/>
            <person name="Huang K."/>
            <person name="Goodstein D.M."/>
            <person name="Hawkins T."/>
            <person name="Plengvidhya V."/>
            <person name="Welker D."/>
            <person name="Hughes J."/>
            <person name="Goh Y."/>
            <person name="Benson A."/>
            <person name="Baldwin K."/>
            <person name="Lee J.-H."/>
            <person name="Diaz-Muniz I."/>
            <person name="Dosti B."/>
            <person name="Smeianov V."/>
            <person name="Wechter W."/>
            <person name="Barabote R."/>
            <person name="Lorca G."/>
            <person name="Altermann E."/>
            <person name="Barrangou R."/>
            <person name="Ganesan B."/>
            <person name="Xie Y."/>
            <person name="Rawsthorne H."/>
            <person name="Tamir D."/>
            <person name="Parker C."/>
            <person name="Breidt F."/>
            <person name="Broadbent J.R."/>
            <person name="Hutkins R."/>
            <person name="O'Sullivan D."/>
            <person name="Steele J."/>
            <person name="Unlu G."/>
            <person name="Saier M.H. Jr."/>
            <person name="Klaenhammer T."/>
            <person name="Richardson P."/>
            <person name="Kozyavkin S."/>
            <person name="Weimer B.C."/>
            <person name="Mills D.A."/>
        </authorList>
    </citation>
    <scope>NUCLEOTIDE SEQUENCE [LARGE SCALE GENOMIC DNA]</scope>
    <source>
        <strain>ATCC BAA-365 / Lb-18</strain>
    </source>
</reference>
<accession>Q049N1</accession>